<evidence type="ECO:0000255" key="1">
    <source>
        <dbReference type="HAMAP-Rule" id="MF_00368"/>
    </source>
</evidence>
<evidence type="ECO:0000305" key="2"/>
<accession>Q2IXS1</accession>
<proteinExistence type="inferred from homology"/>
<name>RL7_RHOP2</name>
<gene>
    <name evidence="1" type="primary">rplL</name>
    <name type="ordered locus">RPB_2284</name>
</gene>
<organism>
    <name type="scientific">Rhodopseudomonas palustris (strain HaA2)</name>
    <dbReference type="NCBI Taxonomy" id="316058"/>
    <lineage>
        <taxon>Bacteria</taxon>
        <taxon>Pseudomonadati</taxon>
        <taxon>Pseudomonadota</taxon>
        <taxon>Alphaproteobacteria</taxon>
        <taxon>Hyphomicrobiales</taxon>
        <taxon>Nitrobacteraceae</taxon>
        <taxon>Rhodopseudomonas</taxon>
    </lineage>
</organism>
<comment type="function">
    <text evidence="1">Forms part of the ribosomal stalk which helps the ribosome interact with GTP-bound translation factors. Is thus essential for accurate translation.</text>
</comment>
<comment type="subunit">
    <text evidence="1">Homodimer. Part of the ribosomal stalk of the 50S ribosomal subunit. Forms a multimeric L10(L12)X complex, where L10 forms an elongated spine to which 2 to 4 L12 dimers bind in a sequential fashion. Binds GTP-bound translation factors.</text>
</comment>
<comment type="similarity">
    <text evidence="1">Belongs to the bacterial ribosomal protein bL12 family.</text>
</comment>
<sequence>MADLQKIVDDLSSLTVLEAAELAKLLEEKWGVSAAAAVAVAAAPGAAAAAVEEKTEFTVMLAAAGDKKIEVIKEVRAITGLGLKEAKDLVEGAPKPVKEGVNKEEADKLKAQLEKAGAKVELK</sequence>
<reference key="1">
    <citation type="submission" date="2006-01" db="EMBL/GenBank/DDBJ databases">
        <title>Complete sequence of Rhodopseudomonas palustris HaA2.</title>
        <authorList>
            <consortium name="US DOE Joint Genome Institute"/>
            <person name="Copeland A."/>
            <person name="Lucas S."/>
            <person name="Lapidus A."/>
            <person name="Barry K."/>
            <person name="Detter J.C."/>
            <person name="Glavina T."/>
            <person name="Hammon N."/>
            <person name="Israni S."/>
            <person name="Pitluck S."/>
            <person name="Chain P."/>
            <person name="Malfatti S."/>
            <person name="Shin M."/>
            <person name="Vergez L."/>
            <person name="Schmutz J."/>
            <person name="Larimer F."/>
            <person name="Land M."/>
            <person name="Hauser L."/>
            <person name="Pelletier D.A."/>
            <person name="Kyrpides N."/>
            <person name="Anderson I."/>
            <person name="Oda Y."/>
            <person name="Harwood C.S."/>
            <person name="Richardson P."/>
        </authorList>
    </citation>
    <scope>NUCLEOTIDE SEQUENCE [LARGE SCALE GENOMIC DNA]</scope>
    <source>
        <strain>HaA2</strain>
    </source>
</reference>
<dbReference type="EMBL" id="CP000250">
    <property type="protein sequence ID" value="ABD06989.1"/>
    <property type="molecule type" value="Genomic_DNA"/>
</dbReference>
<dbReference type="RefSeq" id="WP_011441176.1">
    <property type="nucleotide sequence ID" value="NC_007778.1"/>
</dbReference>
<dbReference type="SMR" id="Q2IXS1"/>
<dbReference type="STRING" id="316058.RPB_2284"/>
<dbReference type="KEGG" id="rpb:RPB_2284"/>
<dbReference type="eggNOG" id="COG0222">
    <property type="taxonomic scope" value="Bacteria"/>
</dbReference>
<dbReference type="HOGENOM" id="CLU_086499_3_0_5"/>
<dbReference type="OrthoDB" id="9811748at2"/>
<dbReference type="Proteomes" id="UP000008809">
    <property type="component" value="Chromosome"/>
</dbReference>
<dbReference type="GO" id="GO:0022625">
    <property type="term" value="C:cytosolic large ribosomal subunit"/>
    <property type="evidence" value="ECO:0007669"/>
    <property type="project" value="TreeGrafter"/>
</dbReference>
<dbReference type="GO" id="GO:0003729">
    <property type="term" value="F:mRNA binding"/>
    <property type="evidence" value="ECO:0007669"/>
    <property type="project" value="TreeGrafter"/>
</dbReference>
<dbReference type="GO" id="GO:0003735">
    <property type="term" value="F:structural constituent of ribosome"/>
    <property type="evidence" value="ECO:0007669"/>
    <property type="project" value="InterPro"/>
</dbReference>
<dbReference type="GO" id="GO:0006412">
    <property type="term" value="P:translation"/>
    <property type="evidence" value="ECO:0007669"/>
    <property type="project" value="UniProtKB-UniRule"/>
</dbReference>
<dbReference type="CDD" id="cd00387">
    <property type="entry name" value="Ribosomal_L7_L12"/>
    <property type="match status" value="1"/>
</dbReference>
<dbReference type="FunFam" id="1.20.5.710:FF:000007">
    <property type="entry name" value="50S ribosomal protein L7/L12"/>
    <property type="match status" value="1"/>
</dbReference>
<dbReference type="FunFam" id="3.30.1390.10:FF:000001">
    <property type="entry name" value="50S ribosomal protein L7/L12"/>
    <property type="match status" value="1"/>
</dbReference>
<dbReference type="Gene3D" id="3.30.1390.10">
    <property type="match status" value="1"/>
</dbReference>
<dbReference type="Gene3D" id="1.20.5.710">
    <property type="entry name" value="Single helix bin"/>
    <property type="match status" value="1"/>
</dbReference>
<dbReference type="HAMAP" id="MF_00368">
    <property type="entry name" value="Ribosomal_bL12"/>
    <property type="match status" value="1"/>
</dbReference>
<dbReference type="InterPro" id="IPR000206">
    <property type="entry name" value="Ribosomal_bL12"/>
</dbReference>
<dbReference type="InterPro" id="IPR013823">
    <property type="entry name" value="Ribosomal_bL12_C"/>
</dbReference>
<dbReference type="InterPro" id="IPR014719">
    <property type="entry name" value="Ribosomal_bL12_C/ClpS-like"/>
</dbReference>
<dbReference type="InterPro" id="IPR008932">
    <property type="entry name" value="Ribosomal_bL12_oligo"/>
</dbReference>
<dbReference type="InterPro" id="IPR036235">
    <property type="entry name" value="Ribosomal_bL12_oligo_N_sf"/>
</dbReference>
<dbReference type="NCBIfam" id="TIGR00855">
    <property type="entry name" value="L12"/>
    <property type="match status" value="1"/>
</dbReference>
<dbReference type="PANTHER" id="PTHR45987">
    <property type="entry name" value="39S RIBOSOMAL PROTEIN L12"/>
    <property type="match status" value="1"/>
</dbReference>
<dbReference type="PANTHER" id="PTHR45987:SF4">
    <property type="entry name" value="LARGE RIBOSOMAL SUBUNIT PROTEIN BL12M"/>
    <property type="match status" value="1"/>
</dbReference>
<dbReference type="Pfam" id="PF00542">
    <property type="entry name" value="Ribosomal_L12"/>
    <property type="match status" value="1"/>
</dbReference>
<dbReference type="Pfam" id="PF16320">
    <property type="entry name" value="Ribosomal_L12_N"/>
    <property type="match status" value="1"/>
</dbReference>
<dbReference type="SUPFAM" id="SSF54736">
    <property type="entry name" value="ClpS-like"/>
    <property type="match status" value="1"/>
</dbReference>
<dbReference type="SUPFAM" id="SSF48300">
    <property type="entry name" value="Ribosomal protein L7/12, oligomerisation (N-terminal) domain"/>
    <property type="match status" value="1"/>
</dbReference>
<keyword id="KW-1185">Reference proteome</keyword>
<keyword id="KW-0687">Ribonucleoprotein</keyword>
<keyword id="KW-0689">Ribosomal protein</keyword>
<feature type="chain" id="PRO_0000243483" description="Large ribosomal subunit protein bL12">
    <location>
        <begin position="1"/>
        <end position="123"/>
    </location>
</feature>
<protein>
    <recommendedName>
        <fullName evidence="1">Large ribosomal subunit protein bL12</fullName>
    </recommendedName>
    <alternativeName>
        <fullName evidence="2">50S ribosomal protein L7/L12</fullName>
    </alternativeName>
</protein>